<name>COX7C_CARSF</name>
<gene>
    <name type="primary">COX7C</name>
</gene>
<comment type="function">
    <text evidence="2">Component of the cytochrome c oxidase, the last enzyme in the mitochondrial electron transport chain which drives oxidative phosphorylation. The respiratory chain contains 3 multisubunit complexes succinate dehydrogenase (complex II, CII), ubiquinol-cytochrome c oxidoreductase (cytochrome b-c1 complex, complex III, CIII) and cytochrome c oxidase (complex IV, CIV), that cooperate to transfer electrons derived from NADH and succinate to molecular oxygen, creating an electrochemical gradient over the inner membrane that drives transmembrane transport and the ATP synthase. Cytochrome c oxidase is the component of the respiratory chain that catalyzes the reduction of oxygen to water. Electrons originating from reduced cytochrome c in the intermembrane space (IMS) are transferred via the dinuclear copper A center (CU(A)) of subunit 2 and heme A of subunit 1 to the active site in subunit 1, a binuclear center (BNC) formed by heme A3 and copper B (CU(B)). The BNC reduces molecular oxygen to 2 water molecules using 4 electrons from cytochrome c in the IMS and 4 protons from the mitochondrial matrix.</text>
</comment>
<comment type="pathway">
    <text evidence="2">Energy metabolism; oxidative phosphorylation.</text>
</comment>
<comment type="subunit">
    <text evidence="1 3">Component of the cytochrome c oxidase (complex IV, CIV), a multisubunit enzyme composed of 14 subunits. The complex is composed of a catalytic core of 3 subunits MT-CO1, MT-CO2 and MT-CO3, encoded in the mitochondrial DNA, and 11 supernumerary subunits COX4I, COX5A, COX5B, COX6A, COX6B, COX6C, COX7A, COX7B, COX7C, COX8 and NDUFA4, which are encoded in the nuclear genome. The complex exists as a monomer or a dimer and forms supercomplexes (SCs) in the inner mitochondrial membrane with NADH-ubiquinone oxidoreductase (complex I, CI) and ubiquinol-cytochrome c oxidoreductase (cytochrome b-c1 complex, complex III, CIII), resulting in different assemblies (supercomplex SCI(1)III(2)IV(1) and megacomplex MCI(2)III(2)IV(2)) (By similarity). Interacts with RAB5IF (By similarity).</text>
</comment>
<comment type="subcellular location">
    <subcellularLocation>
        <location evidence="1">Mitochondrion inner membrane</location>
        <topology evidence="1">Single-pass membrane protein</topology>
    </subcellularLocation>
</comment>
<comment type="similarity">
    <text evidence="5">Belongs to the cytochrome c oxidase VIIc family.</text>
</comment>
<reference key="1">
    <citation type="submission" date="2003-02" db="EMBL/GenBank/DDBJ databases">
        <title>Co-evolution in cytochrome c oxidase: 9 of 13 subunits show accelerated rates of nonsynonymous substitution in anthropoid primates.</title>
        <authorList>
            <person name="Doan J.W."/>
            <person name="Schmidt T.R."/>
            <person name="Wildman D.E."/>
            <person name="Goldberg A."/>
            <person name="Huttemann M."/>
            <person name="Goodman M."/>
            <person name="Weiss M.L."/>
            <person name="Grossman L.I."/>
        </authorList>
    </citation>
    <scope>NUCLEOTIDE SEQUENCE [MRNA]</scope>
</reference>
<dbReference type="EMBL" id="AY236505">
    <property type="protein sequence ID" value="AAP43951.1"/>
    <property type="molecule type" value="mRNA"/>
</dbReference>
<dbReference type="SMR" id="Q7YRK5"/>
<dbReference type="STRING" id="1868482.ENSTSYP00000008712"/>
<dbReference type="HOGENOM" id="CLU_194769_0_0_1"/>
<dbReference type="OMA" id="SIENKWR"/>
<dbReference type="TreeFam" id="TF105069"/>
<dbReference type="UniPathway" id="UPA00705"/>
<dbReference type="Proteomes" id="UP000189704">
    <property type="component" value="Unplaced"/>
</dbReference>
<dbReference type="GO" id="GO:0005743">
    <property type="term" value="C:mitochondrial inner membrane"/>
    <property type="evidence" value="ECO:0007669"/>
    <property type="project" value="UniProtKB-SubCell"/>
</dbReference>
<dbReference type="GO" id="GO:0045277">
    <property type="term" value="C:respiratory chain complex IV"/>
    <property type="evidence" value="ECO:0007669"/>
    <property type="project" value="Ensembl"/>
</dbReference>
<dbReference type="GO" id="GO:0006123">
    <property type="term" value="P:mitochondrial electron transport, cytochrome c to oxygen"/>
    <property type="evidence" value="ECO:0007669"/>
    <property type="project" value="InterPro"/>
</dbReference>
<dbReference type="CDD" id="cd00929">
    <property type="entry name" value="Cyt_c_Oxidase_VIIc"/>
    <property type="match status" value="1"/>
</dbReference>
<dbReference type="FunFam" id="4.10.49.10:FF:000001">
    <property type="entry name" value="Cytochrome c oxidase subunit 7C"/>
    <property type="match status" value="1"/>
</dbReference>
<dbReference type="Gene3D" id="4.10.49.10">
    <property type="entry name" value="Cytochrome c oxidase subunit VIIc"/>
    <property type="match status" value="1"/>
</dbReference>
<dbReference type="InterPro" id="IPR004202">
    <property type="entry name" value="COX7C/Cox8"/>
</dbReference>
<dbReference type="InterPro" id="IPR036636">
    <property type="entry name" value="COX7C/Cox8_sf"/>
</dbReference>
<dbReference type="PANTHER" id="PTHR13313:SF0">
    <property type="entry name" value="CYTOCHROME C OXIDASE SUBUNIT 7C, MITOCHONDRIAL"/>
    <property type="match status" value="1"/>
</dbReference>
<dbReference type="PANTHER" id="PTHR13313">
    <property type="entry name" value="CYTOCHROME C OXIDASE SUBUNIT VIIC"/>
    <property type="match status" value="1"/>
</dbReference>
<dbReference type="Pfam" id="PF02935">
    <property type="entry name" value="COX7C"/>
    <property type="match status" value="1"/>
</dbReference>
<dbReference type="SUPFAM" id="SSF81427">
    <property type="entry name" value="Mitochondrial cytochrome c oxidase subunit VIIc (aka VIIIa)"/>
    <property type="match status" value="1"/>
</dbReference>
<protein>
    <recommendedName>
        <fullName>Cytochrome c oxidase subunit 7C, mitochondrial</fullName>
    </recommendedName>
    <alternativeName>
        <fullName>Cytochrome c oxidase polypeptide VIIc</fullName>
    </alternativeName>
</protein>
<keyword id="KW-0007">Acetylation</keyword>
<keyword id="KW-0472">Membrane</keyword>
<keyword id="KW-0496">Mitochondrion</keyword>
<keyword id="KW-0999">Mitochondrion inner membrane</keyword>
<keyword id="KW-1185">Reference proteome</keyword>
<keyword id="KW-0809">Transit peptide</keyword>
<keyword id="KW-0812">Transmembrane</keyword>
<keyword id="KW-1133">Transmembrane helix</keyword>
<sequence>MWGQGVRRFTTSVVRRSHYEEGPGKNLPFSVENKWRLLAMMTLYLGSGFAAPFFIVRHQLLKK</sequence>
<feature type="transit peptide" description="Mitochondrion" evidence="1">
    <location>
        <begin position="1"/>
        <end position="16"/>
    </location>
</feature>
<feature type="chain" id="PRO_0000006171" description="Cytochrome c oxidase subunit 7C, mitochondrial">
    <location>
        <begin position="17"/>
        <end position="63"/>
    </location>
</feature>
<feature type="topological domain" description="Mitochondrial matrix" evidence="1">
    <location>
        <begin position="17"/>
        <end position="33"/>
    </location>
</feature>
<feature type="transmembrane region" description="Helical" evidence="1">
    <location>
        <begin position="34"/>
        <end position="60"/>
    </location>
</feature>
<feature type="topological domain" description="Mitochondrial intermembrane" evidence="1">
    <location>
        <begin position="61"/>
        <end position="63"/>
    </location>
</feature>
<feature type="modified residue" description="N6-acetyllysine; alternate" evidence="4">
    <location>
        <position position="25"/>
    </location>
</feature>
<feature type="modified residue" description="N6-succinyllysine; alternate" evidence="4">
    <location>
        <position position="25"/>
    </location>
</feature>
<evidence type="ECO:0000250" key="1">
    <source>
        <dbReference type="UniProtKB" id="P00430"/>
    </source>
</evidence>
<evidence type="ECO:0000250" key="2">
    <source>
        <dbReference type="UniProtKB" id="P04039"/>
    </source>
</evidence>
<evidence type="ECO:0000250" key="3">
    <source>
        <dbReference type="UniProtKB" id="P15954"/>
    </source>
</evidence>
<evidence type="ECO:0000250" key="4">
    <source>
        <dbReference type="UniProtKB" id="P17665"/>
    </source>
</evidence>
<evidence type="ECO:0000305" key="5"/>
<proteinExistence type="inferred from homology"/>
<organism>
    <name type="scientific">Carlito syrichta</name>
    <name type="common">Philippine tarsier</name>
    <name type="synonym">Tarsius syrichta</name>
    <dbReference type="NCBI Taxonomy" id="1868482"/>
    <lineage>
        <taxon>Eukaryota</taxon>
        <taxon>Metazoa</taxon>
        <taxon>Chordata</taxon>
        <taxon>Craniata</taxon>
        <taxon>Vertebrata</taxon>
        <taxon>Euteleostomi</taxon>
        <taxon>Mammalia</taxon>
        <taxon>Eutheria</taxon>
        <taxon>Euarchontoglires</taxon>
        <taxon>Primates</taxon>
        <taxon>Haplorrhini</taxon>
        <taxon>Tarsiiformes</taxon>
        <taxon>Tarsiidae</taxon>
        <taxon>Carlito</taxon>
    </lineage>
</organism>
<accession>Q7YRK5</accession>